<evidence type="ECO:0000250" key="1"/>
<evidence type="ECO:0000250" key="2">
    <source>
        <dbReference type="UniProtKB" id="Q9QUK3"/>
    </source>
</evidence>
<evidence type="ECO:0000250" key="3">
    <source>
        <dbReference type="UniProtKB" id="Q9UBY8"/>
    </source>
</evidence>
<evidence type="ECO:0000255" key="4"/>
<evidence type="ECO:0000255" key="5">
    <source>
        <dbReference type="PROSITE-ProRule" id="PRU00205"/>
    </source>
</evidence>
<evidence type="ECO:0000256" key="6">
    <source>
        <dbReference type="SAM" id="MobiDB-lite"/>
    </source>
</evidence>
<evidence type="ECO:0000269" key="7">
    <source>
    </source>
</evidence>
<comment type="function">
    <text evidence="3">Could play a role in cell proliferation during neuronal differentiation and in protection against cell death.</text>
</comment>
<comment type="subunit">
    <text evidence="2 3">Interacts with CLN5. Interacts with CLN3 (By similarity).</text>
</comment>
<comment type="subcellular location">
    <subcellularLocation>
        <location evidence="3">Endoplasmic reticulum membrane</location>
        <topology evidence="4">Multi-pass membrane protein</topology>
    </subcellularLocation>
    <subcellularLocation>
        <location evidence="3">Endoplasmic reticulum-Golgi intermediate compartment membrane</location>
        <topology evidence="4">Multi-pass membrane protein</topology>
    </subcellularLocation>
    <subcellularLocation>
        <location evidence="3">Endoplasmic reticulum</location>
    </subcellularLocation>
</comment>
<comment type="disease">
    <text evidence="7">Defects in CLN8 are a cause of a form of neuronal ceroid lipofuscinosis (NCL) in English setters.</text>
</comment>
<proteinExistence type="evidence at protein level"/>
<organism>
    <name type="scientific">Canis lupus familiaris</name>
    <name type="common">Dog</name>
    <name type="synonym">Canis familiaris</name>
    <dbReference type="NCBI Taxonomy" id="9615"/>
    <lineage>
        <taxon>Eukaryota</taxon>
        <taxon>Metazoa</taxon>
        <taxon>Chordata</taxon>
        <taxon>Craniata</taxon>
        <taxon>Vertebrata</taxon>
        <taxon>Euteleostomi</taxon>
        <taxon>Mammalia</taxon>
        <taxon>Eutheria</taxon>
        <taxon>Laurasiatheria</taxon>
        <taxon>Carnivora</taxon>
        <taxon>Caniformia</taxon>
        <taxon>Canidae</taxon>
        <taxon>Canis</taxon>
    </lineage>
</organism>
<name>CLN8_CANLF</name>
<reference key="1">
    <citation type="submission" date="2005-01" db="EMBL/GenBank/DDBJ databases">
        <title>Characterization of candidate genes for neuronal ceroid lipofuscinosis in Tibetan terrier dogs.</title>
        <authorList>
            <person name="Droegemueller C."/>
            <person name="Woehlke A."/>
            <person name="Distl O."/>
        </authorList>
    </citation>
    <scope>NUCLEOTIDE SEQUENCE [MRNA]</scope>
</reference>
<reference key="2">
    <citation type="journal article" date="2005" name="Biochem. Biophys. Res. Commun.">
        <title>A mutation in the CLN8 gene in English Setter dogs with neuronal ceroid-lipofuscinosis.</title>
        <authorList>
            <person name="Katz M.L."/>
            <person name="Khan S."/>
            <person name="Awano T."/>
            <person name="Shahid S.A."/>
            <person name="Siakotos A.N."/>
            <person name="Johnson G.S."/>
        </authorList>
    </citation>
    <scope>NUCLEOTIDE SEQUENCE [GENOMIC DNA]</scope>
    <scope>INVOLVEMENT IN NCL</scope>
    <scope>VARIANT NCL PRO-164</scope>
</reference>
<gene>
    <name type="primary">CLN8</name>
</gene>
<dbReference type="EMBL" id="AJ875419">
    <property type="protein sequence ID" value="CAI44940.1"/>
    <property type="molecule type" value="mRNA"/>
</dbReference>
<dbReference type="EMBL" id="AY785294">
    <property type="protein sequence ID" value="AAW34405.1"/>
    <property type="molecule type" value="Genomic_DNA"/>
</dbReference>
<dbReference type="EMBL" id="AY785293">
    <property type="protein sequence ID" value="AAW34405.1"/>
    <property type="status" value="JOINED"/>
    <property type="molecule type" value="Genomic_DNA"/>
</dbReference>
<dbReference type="RefSeq" id="NP_001012343.1">
    <property type="nucleotide sequence ID" value="NM_001012343.1"/>
</dbReference>
<dbReference type="RefSeq" id="XP_005640493.1">
    <property type="nucleotide sequence ID" value="XM_005640436.2"/>
</dbReference>
<dbReference type="RefSeq" id="XP_038303251.1">
    <property type="nucleotide sequence ID" value="XM_038447323.1"/>
</dbReference>
<dbReference type="RefSeq" id="XP_038303252.1">
    <property type="nucleotide sequence ID" value="XM_038447324.1"/>
</dbReference>
<dbReference type="RefSeq" id="XP_038303253.1">
    <property type="nucleotide sequence ID" value="XM_038447325.1"/>
</dbReference>
<dbReference type="RefSeq" id="XP_038303254.1">
    <property type="nucleotide sequence ID" value="XM_038447326.1"/>
</dbReference>
<dbReference type="FunCoup" id="Q5JZQ7">
    <property type="interactions" value="182"/>
</dbReference>
<dbReference type="STRING" id="9615.ENSCAFP00000024048"/>
<dbReference type="PaxDb" id="9612-ENSCAFP00000024048"/>
<dbReference type="Ensembl" id="ENSCAFT00000025898.5">
    <property type="protein sequence ID" value="ENSCAFP00000024048.3"/>
    <property type="gene ID" value="ENSCAFG00000016330.5"/>
</dbReference>
<dbReference type="Ensembl" id="ENSCAFT00030029025.1">
    <property type="protein sequence ID" value="ENSCAFP00030025303.1"/>
    <property type="gene ID" value="ENSCAFG00030015756.1"/>
</dbReference>
<dbReference type="Ensembl" id="ENSCAFT00040023273.1">
    <property type="protein sequence ID" value="ENSCAFP00040020187.1"/>
    <property type="gene ID" value="ENSCAFG00040012616.1"/>
</dbReference>
<dbReference type="Ensembl" id="ENSCAFT00845033703.1">
    <property type="protein sequence ID" value="ENSCAFP00845026384.1"/>
    <property type="gene ID" value="ENSCAFG00845019093.1"/>
</dbReference>
<dbReference type="GeneID" id="488558"/>
<dbReference type="KEGG" id="cfa:488558"/>
<dbReference type="CTD" id="2055"/>
<dbReference type="VEuPathDB" id="HostDB:ENSCAFG00845019093"/>
<dbReference type="eggNOG" id="KOG4561">
    <property type="taxonomic scope" value="Eukaryota"/>
</dbReference>
<dbReference type="GeneTree" id="ENSGT01010000222313"/>
<dbReference type="HOGENOM" id="CLU_951678_0_0_1"/>
<dbReference type="InParanoid" id="Q5JZQ7"/>
<dbReference type="OMA" id="FFRTFDL"/>
<dbReference type="OrthoDB" id="10052906at2759"/>
<dbReference type="TreeFam" id="TF331146"/>
<dbReference type="Proteomes" id="UP000002254">
    <property type="component" value="Chromosome 37"/>
</dbReference>
<dbReference type="Proteomes" id="UP000694429">
    <property type="component" value="Chromosome 37"/>
</dbReference>
<dbReference type="Proteomes" id="UP000694542">
    <property type="component" value="Chromosome 37"/>
</dbReference>
<dbReference type="Proteomes" id="UP000805418">
    <property type="component" value="Chromosome 37"/>
</dbReference>
<dbReference type="Bgee" id="ENSCAFG00000016330">
    <property type="expression patterns" value="Expressed in mucosa of urinary bladder and 47 other cell types or tissues"/>
</dbReference>
<dbReference type="GO" id="GO:0005783">
    <property type="term" value="C:endoplasmic reticulum"/>
    <property type="evidence" value="ECO:0000250"/>
    <property type="project" value="UniProtKB"/>
</dbReference>
<dbReference type="GO" id="GO:0005789">
    <property type="term" value="C:endoplasmic reticulum membrane"/>
    <property type="evidence" value="ECO:0007669"/>
    <property type="project" value="UniProtKB-SubCell"/>
</dbReference>
<dbReference type="GO" id="GO:0005793">
    <property type="term" value="C:endoplasmic reticulum-Golgi intermediate compartment"/>
    <property type="evidence" value="ECO:0000250"/>
    <property type="project" value="UniProtKB"/>
</dbReference>
<dbReference type="GO" id="GO:0033116">
    <property type="term" value="C:endoplasmic reticulum-Golgi intermediate compartment membrane"/>
    <property type="evidence" value="ECO:0007669"/>
    <property type="project" value="UniProtKB-SubCell"/>
</dbReference>
<dbReference type="GO" id="GO:0097001">
    <property type="term" value="F:ceramide binding"/>
    <property type="evidence" value="ECO:0000250"/>
    <property type="project" value="UniProtKB"/>
</dbReference>
<dbReference type="GO" id="GO:0006672">
    <property type="term" value="P:ceramide metabolic process"/>
    <property type="evidence" value="ECO:0000250"/>
    <property type="project" value="UniProtKB"/>
</dbReference>
<dbReference type="GO" id="GO:0008203">
    <property type="term" value="P:cholesterol metabolic process"/>
    <property type="evidence" value="ECO:0000250"/>
    <property type="project" value="UniProtKB"/>
</dbReference>
<dbReference type="GO" id="GO:0055088">
    <property type="term" value="P:lipid homeostasis"/>
    <property type="evidence" value="ECO:0000318"/>
    <property type="project" value="GO_Central"/>
</dbReference>
<dbReference type="GO" id="GO:0007399">
    <property type="term" value="P:nervous system development"/>
    <property type="evidence" value="ECO:0000250"/>
    <property type="project" value="UniProtKB"/>
</dbReference>
<dbReference type="GO" id="GO:0006644">
    <property type="term" value="P:phospholipid metabolic process"/>
    <property type="evidence" value="ECO:0000250"/>
    <property type="project" value="UniProtKB"/>
</dbReference>
<dbReference type="InterPro" id="IPR006634">
    <property type="entry name" value="TLC-dom"/>
</dbReference>
<dbReference type="InterPro" id="IPR050846">
    <property type="entry name" value="TLCD"/>
</dbReference>
<dbReference type="PANTHER" id="PTHR13439">
    <property type="entry name" value="CT120 PROTEIN"/>
    <property type="match status" value="1"/>
</dbReference>
<dbReference type="PANTHER" id="PTHR13439:SF7">
    <property type="entry name" value="PROTEIN CLN8"/>
    <property type="match status" value="1"/>
</dbReference>
<dbReference type="Pfam" id="PF03798">
    <property type="entry name" value="TRAM_LAG1_CLN8"/>
    <property type="match status" value="1"/>
</dbReference>
<dbReference type="SMART" id="SM00724">
    <property type="entry name" value="TLC"/>
    <property type="match status" value="1"/>
</dbReference>
<dbReference type="PROSITE" id="PS50922">
    <property type="entry name" value="TLC"/>
    <property type="match status" value="1"/>
</dbReference>
<sequence length="288" mass="32639">MTPMSDGGTSESIFDLDYTSWKIRSTLAVAGFVFYLGVFVVCHQLSSSLNATYRSLVAREKVFWNLAATRAVFGVQSTAAGLWALLVDPVLHADKARGQQNWCWFHIATATGFFFFENVAVHLSNVLFRTFDLFLAIHHLFAFLGFLGSVVNLGAGHYLAMSTLLLEASTPFTCISWMLLKAGWSESLFWKLNQWLMIHMFHCRMVLTYHMWWVCFWHWDGLVSSLYLPHLALFLVGLGLLTLVINPYWTHKKTQQLLNPVDWNFAQPAPRSSRPAGANGQVPQKKGQ</sequence>
<feature type="chain" id="PRO_0000185536" description="Protein CLN8">
    <location>
        <begin position="1"/>
        <end position="288"/>
    </location>
</feature>
<feature type="transmembrane region" description="Helical" evidence="4">
    <location>
        <begin position="25"/>
        <end position="45"/>
    </location>
</feature>
<feature type="transmembrane region" description="Helical" evidence="4">
    <location>
        <begin position="71"/>
        <end position="91"/>
    </location>
</feature>
<feature type="transmembrane region" description="Helical" evidence="4">
    <location>
        <begin position="103"/>
        <end position="123"/>
    </location>
</feature>
<feature type="transmembrane region" description="Helical" evidence="4">
    <location>
        <begin position="131"/>
        <end position="151"/>
    </location>
</feature>
<feature type="transmembrane region" description="Helical" evidence="4">
    <location>
        <begin position="225"/>
        <end position="245"/>
    </location>
</feature>
<feature type="domain" description="TLC" evidence="5">
    <location>
        <begin position="62"/>
        <end position="262"/>
    </location>
</feature>
<feature type="region of interest" description="Disordered" evidence="6">
    <location>
        <begin position="269"/>
        <end position="288"/>
    </location>
</feature>
<feature type="short sequence motif" description="ER-retrieval signal" evidence="1">
    <location>
        <begin position="285"/>
        <end position="288"/>
    </location>
</feature>
<feature type="sequence variant" description="In NCL." evidence="7">
    <original>L</original>
    <variation>P</variation>
    <location>
        <position position="164"/>
    </location>
</feature>
<protein>
    <recommendedName>
        <fullName>Protein CLN8</fullName>
    </recommendedName>
</protein>
<keyword id="KW-0225">Disease variant</keyword>
<keyword id="KW-0256">Endoplasmic reticulum</keyword>
<keyword id="KW-0472">Membrane</keyword>
<keyword id="KW-0523">Neurodegeneration</keyword>
<keyword id="KW-0525">Neuronal ceroid lipofuscinosis</keyword>
<keyword id="KW-1185">Reference proteome</keyword>
<keyword id="KW-0812">Transmembrane</keyword>
<keyword id="KW-1133">Transmembrane helix</keyword>
<accession>Q5JZQ7</accession>
<accession>Q2VUD9</accession>